<proteinExistence type="inferred from homology"/>
<feature type="initiator methionine" description="Removed" evidence="1">
    <location>
        <position position="1"/>
    </location>
</feature>
<feature type="chain" id="PRO_0000228479" description="Formamidopyrimidine-DNA glycosylase">
    <location>
        <begin position="2"/>
        <end position="267"/>
    </location>
</feature>
<feature type="zinc finger region" description="FPG-type" evidence="2">
    <location>
        <begin position="230"/>
        <end position="264"/>
    </location>
</feature>
<feature type="active site" description="Schiff-base intermediate with DNA" evidence="2">
    <location>
        <position position="2"/>
    </location>
</feature>
<feature type="active site" description="Proton donor" evidence="2">
    <location>
        <position position="3"/>
    </location>
</feature>
<feature type="active site" description="Proton donor; for beta-elimination activity" evidence="2">
    <location>
        <position position="53"/>
    </location>
</feature>
<feature type="active site" description="Proton donor; for delta-elimination activity" evidence="2">
    <location>
        <position position="254"/>
    </location>
</feature>
<feature type="binding site" evidence="2">
    <location>
        <position position="82"/>
    </location>
    <ligand>
        <name>DNA</name>
        <dbReference type="ChEBI" id="CHEBI:16991"/>
    </ligand>
</feature>
<feature type="binding site" evidence="2">
    <location>
        <position position="100"/>
    </location>
    <ligand>
        <name>DNA</name>
        <dbReference type="ChEBI" id="CHEBI:16991"/>
    </ligand>
</feature>
<name>FPG_THET2</name>
<sequence>MPELPEVETTRRRLRPLVLGQTLRQVVHRDPARYRNTALAEGRRILEVDRRGKFLLFALEGGVELVAHLGMTGGFRLEPTPHTRAALVLEGRTLYFHDPRRFGRLFGVRRGDYREIPLLLRLGPEPLSEAFAFPGFFRGLKESARPLKALLLDQRLAAGVGNIYADEALFRARLSPFRPARSLTEEEARRLYRALREVLAEAVELGGSTLSDQSYRQPDGLPGGFQTRHAVYGREGLPCPACGRPVERRVVAGRGTHFCPTCQGEGP</sequence>
<dbReference type="EC" id="3.2.2.23" evidence="2"/>
<dbReference type="EC" id="4.2.99.18" evidence="2"/>
<dbReference type="EMBL" id="AE017221">
    <property type="protein sequence ID" value="AAS81796.1"/>
    <property type="molecule type" value="Genomic_DNA"/>
</dbReference>
<dbReference type="RefSeq" id="WP_011173830.1">
    <property type="nucleotide sequence ID" value="NC_005835.1"/>
</dbReference>
<dbReference type="SMR" id="Q72HN2"/>
<dbReference type="GeneID" id="3169771"/>
<dbReference type="KEGG" id="tth:TT_C1454"/>
<dbReference type="eggNOG" id="COG0266">
    <property type="taxonomic scope" value="Bacteria"/>
</dbReference>
<dbReference type="HOGENOM" id="CLU_038423_1_2_0"/>
<dbReference type="OrthoDB" id="9800855at2"/>
<dbReference type="Proteomes" id="UP000000592">
    <property type="component" value="Chromosome"/>
</dbReference>
<dbReference type="GO" id="GO:0034039">
    <property type="term" value="F:8-oxo-7,8-dihydroguanine DNA N-glycosylase activity"/>
    <property type="evidence" value="ECO:0007669"/>
    <property type="project" value="TreeGrafter"/>
</dbReference>
<dbReference type="GO" id="GO:0140078">
    <property type="term" value="F:class I DNA-(apurinic or apyrimidinic site) endonuclease activity"/>
    <property type="evidence" value="ECO:0007669"/>
    <property type="project" value="UniProtKB-EC"/>
</dbReference>
<dbReference type="GO" id="GO:0003684">
    <property type="term" value="F:damaged DNA binding"/>
    <property type="evidence" value="ECO:0007669"/>
    <property type="project" value="InterPro"/>
</dbReference>
<dbReference type="GO" id="GO:0008270">
    <property type="term" value="F:zinc ion binding"/>
    <property type="evidence" value="ECO:0007669"/>
    <property type="project" value="UniProtKB-UniRule"/>
</dbReference>
<dbReference type="GO" id="GO:0006284">
    <property type="term" value="P:base-excision repair"/>
    <property type="evidence" value="ECO:0007669"/>
    <property type="project" value="InterPro"/>
</dbReference>
<dbReference type="CDD" id="cd08966">
    <property type="entry name" value="EcFpg-like_N"/>
    <property type="match status" value="1"/>
</dbReference>
<dbReference type="FunFam" id="1.10.8.50:FF:000003">
    <property type="entry name" value="Formamidopyrimidine-DNA glycosylase"/>
    <property type="match status" value="1"/>
</dbReference>
<dbReference type="Gene3D" id="1.10.8.50">
    <property type="match status" value="1"/>
</dbReference>
<dbReference type="Gene3D" id="3.20.190.10">
    <property type="entry name" value="MutM-like, N-terminal"/>
    <property type="match status" value="1"/>
</dbReference>
<dbReference type="HAMAP" id="MF_00103">
    <property type="entry name" value="Fapy_DNA_glycosyl"/>
    <property type="match status" value="1"/>
</dbReference>
<dbReference type="InterPro" id="IPR015886">
    <property type="entry name" value="DNA_glyclase/AP_lyase_DNA-bd"/>
</dbReference>
<dbReference type="InterPro" id="IPR015887">
    <property type="entry name" value="DNA_glyclase_Znf_dom_DNA_BS"/>
</dbReference>
<dbReference type="InterPro" id="IPR020629">
    <property type="entry name" value="Formamido-pyr_DNA_Glyclase"/>
</dbReference>
<dbReference type="InterPro" id="IPR012319">
    <property type="entry name" value="FPG_cat"/>
</dbReference>
<dbReference type="InterPro" id="IPR035937">
    <property type="entry name" value="MutM-like_N-ter"/>
</dbReference>
<dbReference type="InterPro" id="IPR010979">
    <property type="entry name" value="Ribosomal_uS13-like_H2TH"/>
</dbReference>
<dbReference type="InterPro" id="IPR000214">
    <property type="entry name" value="Znf_DNA_glyclase/AP_lyase"/>
</dbReference>
<dbReference type="InterPro" id="IPR010663">
    <property type="entry name" value="Znf_FPG/IleRS"/>
</dbReference>
<dbReference type="NCBIfam" id="TIGR00577">
    <property type="entry name" value="fpg"/>
    <property type="match status" value="1"/>
</dbReference>
<dbReference type="NCBIfam" id="NF002211">
    <property type="entry name" value="PRK01103.1"/>
    <property type="match status" value="1"/>
</dbReference>
<dbReference type="NCBIfam" id="NF011386">
    <property type="entry name" value="PRK14811.1"/>
    <property type="match status" value="1"/>
</dbReference>
<dbReference type="PANTHER" id="PTHR22993">
    <property type="entry name" value="FORMAMIDOPYRIMIDINE-DNA GLYCOSYLASE"/>
    <property type="match status" value="1"/>
</dbReference>
<dbReference type="PANTHER" id="PTHR22993:SF9">
    <property type="entry name" value="FORMAMIDOPYRIMIDINE-DNA GLYCOSYLASE"/>
    <property type="match status" value="1"/>
</dbReference>
<dbReference type="Pfam" id="PF01149">
    <property type="entry name" value="Fapy_DNA_glyco"/>
    <property type="match status" value="1"/>
</dbReference>
<dbReference type="Pfam" id="PF06831">
    <property type="entry name" value="H2TH"/>
    <property type="match status" value="1"/>
</dbReference>
<dbReference type="Pfam" id="PF06827">
    <property type="entry name" value="zf-FPG_IleRS"/>
    <property type="match status" value="1"/>
</dbReference>
<dbReference type="SMART" id="SM00898">
    <property type="entry name" value="Fapy_DNA_glyco"/>
    <property type="match status" value="1"/>
</dbReference>
<dbReference type="SMART" id="SM01232">
    <property type="entry name" value="H2TH"/>
    <property type="match status" value="1"/>
</dbReference>
<dbReference type="SUPFAM" id="SSF57716">
    <property type="entry name" value="Glucocorticoid receptor-like (DNA-binding domain)"/>
    <property type="match status" value="1"/>
</dbReference>
<dbReference type="SUPFAM" id="SSF81624">
    <property type="entry name" value="N-terminal domain of MutM-like DNA repair proteins"/>
    <property type="match status" value="1"/>
</dbReference>
<dbReference type="SUPFAM" id="SSF46946">
    <property type="entry name" value="S13-like H2TH domain"/>
    <property type="match status" value="1"/>
</dbReference>
<dbReference type="PROSITE" id="PS51068">
    <property type="entry name" value="FPG_CAT"/>
    <property type="match status" value="1"/>
</dbReference>
<dbReference type="PROSITE" id="PS01242">
    <property type="entry name" value="ZF_FPG_1"/>
    <property type="match status" value="1"/>
</dbReference>
<dbReference type="PROSITE" id="PS51066">
    <property type="entry name" value="ZF_FPG_2"/>
    <property type="match status" value="1"/>
</dbReference>
<keyword id="KW-0227">DNA damage</keyword>
<keyword id="KW-0234">DNA repair</keyword>
<keyword id="KW-0238">DNA-binding</keyword>
<keyword id="KW-0326">Glycosidase</keyword>
<keyword id="KW-0378">Hydrolase</keyword>
<keyword id="KW-0456">Lyase</keyword>
<keyword id="KW-0479">Metal-binding</keyword>
<keyword id="KW-0511">Multifunctional enzyme</keyword>
<keyword id="KW-0862">Zinc</keyword>
<keyword id="KW-0863">Zinc-finger</keyword>
<organism>
    <name type="scientific">Thermus thermophilus (strain ATCC BAA-163 / DSM 7039 / HB27)</name>
    <dbReference type="NCBI Taxonomy" id="262724"/>
    <lineage>
        <taxon>Bacteria</taxon>
        <taxon>Thermotogati</taxon>
        <taxon>Deinococcota</taxon>
        <taxon>Deinococci</taxon>
        <taxon>Thermales</taxon>
        <taxon>Thermaceae</taxon>
        <taxon>Thermus</taxon>
    </lineage>
</organism>
<comment type="function">
    <text evidence="2">Involved in base excision repair of DNA damaged by oxidation or by mutagenic agents. Acts as a DNA glycosylase that recognizes and removes damaged bases. Has a preference for oxidized purines, such as 7,8-dihydro-8-oxoguanine (8-oxoG). Has AP (apurinic/apyrimidinic) lyase activity and introduces nicks in the DNA strand. Cleaves the DNA backbone by beta-delta elimination to generate a single-strand break at the site of the removed base with both 3'- and 5'-phosphates.</text>
</comment>
<comment type="catalytic activity">
    <reaction evidence="2">
        <text>Hydrolysis of DNA containing ring-opened 7-methylguanine residues, releasing 2,6-diamino-4-hydroxy-5-(N-methyl)formamidopyrimidine.</text>
        <dbReference type="EC" id="3.2.2.23"/>
    </reaction>
</comment>
<comment type="catalytic activity">
    <reaction evidence="2">
        <text>2'-deoxyribonucleotide-(2'-deoxyribose 5'-phosphate)-2'-deoxyribonucleotide-DNA = a 3'-end 2'-deoxyribonucleotide-(2,3-dehydro-2,3-deoxyribose 5'-phosphate)-DNA + a 5'-end 5'-phospho-2'-deoxyribonucleoside-DNA + H(+)</text>
        <dbReference type="Rhea" id="RHEA:66592"/>
        <dbReference type="Rhea" id="RHEA-COMP:13180"/>
        <dbReference type="Rhea" id="RHEA-COMP:16897"/>
        <dbReference type="Rhea" id="RHEA-COMP:17067"/>
        <dbReference type="ChEBI" id="CHEBI:15378"/>
        <dbReference type="ChEBI" id="CHEBI:136412"/>
        <dbReference type="ChEBI" id="CHEBI:157695"/>
        <dbReference type="ChEBI" id="CHEBI:167181"/>
        <dbReference type="EC" id="4.2.99.18"/>
    </reaction>
</comment>
<comment type="cofactor">
    <cofactor evidence="2">
        <name>Zn(2+)</name>
        <dbReference type="ChEBI" id="CHEBI:29105"/>
    </cofactor>
    <text evidence="2">Binds 1 zinc ion per subunit.</text>
</comment>
<comment type="subunit">
    <text evidence="2">Monomer.</text>
</comment>
<comment type="similarity">
    <text evidence="2">Belongs to the FPG family.</text>
</comment>
<accession>Q72HN2</accession>
<evidence type="ECO:0000250" key="1"/>
<evidence type="ECO:0000255" key="2">
    <source>
        <dbReference type="HAMAP-Rule" id="MF_00103"/>
    </source>
</evidence>
<protein>
    <recommendedName>
        <fullName evidence="2">Formamidopyrimidine-DNA glycosylase</fullName>
        <shortName evidence="2">Fapy-DNA glycosylase</shortName>
        <ecNumber evidence="2">3.2.2.23</ecNumber>
    </recommendedName>
    <alternativeName>
        <fullName evidence="2">DNA-(apurinic or apyrimidinic site) lyase MutM</fullName>
        <shortName evidence="2">AP lyase MutM</shortName>
        <ecNumber evidence="2">4.2.99.18</ecNumber>
    </alternativeName>
</protein>
<gene>
    <name evidence="2" type="primary">mutM</name>
    <name evidence="2" type="synonym">fpg</name>
    <name type="ordered locus">TT_C1454</name>
</gene>
<reference key="1">
    <citation type="journal article" date="2004" name="Nat. Biotechnol.">
        <title>The genome sequence of the extreme thermophile Thermus thermophilus.</title>
        <authorList>
            <person name="Henne A."/>
            <person name="Brueggemann H."/>
            <person name="Raasch C."/>
            <person name="Wiezer A."/>
            <person name="Hartsch T."/>
            <person name="Liesegang H."/>
            <person name="Johann A."/>
            <person name="Lienard T."/>
            <person name="Gohl O."/>
            <person name="Martinez-Arias R."/>
            <person name="Jacobi C."/>
            <person name="Starkuviene V."/>
            <person name="Schlenczeck S."/>
            <person name="Dencker S."/>
            <person name="Huber R."/>
            <person name="Klenk H.-P."/>
            <person name="Kramer W."/>
            <person name="Merkl R."/>
            <person name="Gottschalk G."/>
            <person name="Fritz H.-J."/>
        </authorList>
    </citation>
    <scope>NUCLEOTIDE SEQUENCE [LARGE SCALE GENOMIC DNA]</scope>
    <source>
        <strain>ATCC BAA-163 / DSM 7039 / HB27</strain>
    </source>
</reference>